<reference key="1">
    <citation type="journal article" date="2006" name="BMC Genomics">
        <title>Complete genome sequence of Shigella flexneri 5b and comparison with Shigella flexneri 2a.</title>
        <authorList>
            <person name="Nie H."/>
            <person name="Yang F."/>
            <person name="Zhang X."/>
            <person name="Yang J."/>
            <person name="Chen L."/>
            <person name="Wang J."/>
            <person name="Xiong Z."/>
            <person name="Peng J."/>
            <person name="Sun L."/>
            <person name="Dong J."/>
            <person name="Xue Y."/>
            <person name="Xu X."/>
            <person name="Chen S."/>
            <person name="Yao Z."/>
            <person name="Shen Y."/>
            <person name="Jin Q."/>
        </authorList>
    </citation>
    <scope>NUCLEOTIDE SEQUENCE [LARGE SCALE GENOMIC DNA]</scope>
    <source>
        <strain>8401</strain>
    </source>
</reference>
<dbReference type="EC" id="2.9.1.3" evidence="1"/>
<dbReference type="EMBL" id="CP000266">
    <property type="protein sequence ID" value="ABF02736.1"/>
    <property type="molecule type" value="Genomic_DNA"/>
</dbReference>
<dbReference type="SMR" id="Q0T790"/>
<dbReference type="KEGG" id="sfv:SFV_0470"/>
<dbReference type="HOGENOM" id="CLU_043456_1_0_6"/>
<dbReference type="Proteomes" id="UP000000659">
    <property type="component" value="Chromosome"/>
</dbReference>
<dbReference type="GO" id="GO:0016765">
    <property type="term" value="F:transferase activity, transferring alkyl or aryl (other than methyl) groups"/>
    <property type="evidence" value="ECO:0007669"/>
    <property type="project" value="UniProtKB-UniRule"/>
</dbReference>
<dbReference type="GO" id="GO:0043828">
    <property type="term" value="F:tRNA 2-selenouridine synthase activity"/>
    <property type="evidence" value="ECO:0007669"/>
    <property type="project" value="UniProtKB-EC"/>
</dbReference>
<dbReference type="GO" id="GO:0002098">
    <property type="term" value="P:tRNA wobble uridine modification"/>
    <property type="evidence" value="ECO:0007669"/>
    <property type="project" value="UniProtKB-UniRule"/>
</dbReference>
<dbReference type="CDD" id="cd01520">
    <property type="entry name" value="RHOD_YbbB"/>
    <property type="match status" value="1"/>
</dbReference>
<dbReference type="FunFam" id="3.40.250.10:FF:000009">
    <property type="entry name" value="tRNA 2-selenouridine/geranyl-2-thiouridine synthase"/>
    <property type="match status" value="1"/>
</dbReference>
<dbReference type="Gene3D" id="3.40.250.10">
    <property type="entry name" value="Rhodanese-like domain"/>
    <property type="match status" value="1"/>
</dbReference>
<dbReference type="HAMAP" id="MF_01622">
    <property type="entry name" value="tRNA_sel_U_synth"/>
    <property type="match status" value="1"/>
</dbReference>
<dbReference type="InterPro" id="IPR001763">
    <property type="entry name" value="Rhodanese-like_dom"/>
</dbReference>
<dbReference type="InterPro" id="IPR036873">
    <property type="entry name" value="Rhodanese-like_dom_sf"/>
</dbReference>
<dbReference type="InterPro" id="IPR017582">
    <property type="entry name" value="SelU"/>
</dbReference>
<dbReference type="NCBIfam" id="NF008749">
    <property type="entry name" value="PRK11784.1-1"/>
    <property type="match status" value="1"/>
</dbReference>
<dbReference type="NCBIfam" id="NF008751">
    <property type="entry name" value="PRK11784.1-3"/>
    <property type="match status" value="1"/>
</dbReference>
<dbReference type="NCBIfam" id="TIGR03167">
    <property type="entry name" value="tRNA_sel_U_synt"/>
    <property type="match status" value="1"/>
</dbReference>
<dbReference type="PANTHER" id="PTHR30401">
    <property type="entry name" value="TRNA 2-SELENOURIDINE SYNTHASE"/>
    <property type="match status" value="1"/>
</dbReference>
<dbReference type="PANTHER" id="PTHR30401:SF0">
    <property type="entry name" value="TRNA 2-SELENOURIDINE SYNTHASE"/>
    <property type="match status" value="1"/>
</dbReference>
<dbReference type="Pfam" id="PF00581">
    <property type="entry name" value="Rhodanese"/>
    <property type="match status" value="1"/>
</dbReference>
<dbReference type="SMART" id="SM00450">
    <property type="entry name" value="RHOD"/>
    <property type="match status" value="1"/>
</dbReference>
<dbReference type="SUPFAM" id="SSF52821">
    <property type="entry name" value="Rhodanese/Cell cycle control phosphatase"/>
    <property type="match status" value="1"/>
</dbReference>
<dbReference type="PROSITE" id="PS50206">
    <property type="entry name" value="RHODANESE_3"/>
    <property type="match status" value="1"/>
</dbReference>
<name>SELU_SHIF8</name>
<organism>
    <name type="scientific">Shigella flexneri serotype 5b (strain 8401)</name>
    <dbReference type="NCBI Taxonomy" id="373384"/>
    <lineage>
        <taxon>Bacteria</taxon>
        <taxon>Pseudomonadati</taxon>
        <taxon>Pseudomonadota</taxon>
        <taxon>Gammaproteobacteria</taxon>
        <taxon>Enterobacterales</taxon>
        <taxon>Enterobacteriaceae</taxon>
        <taxon>Shigella</taxon>
    </lineage>
</organism>
<protein>
    <recommendedName>
        <fullName evidence="1">tRNA 2-selenouridine synthase</fullName>
        <ecNumber evidence="1">2.9.1.3</ecNumber>
    </recommendedName>
</protein>
<accession>Q0T790</accession>
<keyword id="KW-0711">Selenium</keyword>
<keyword id="KW-0808">Transferase</keyword>
<comment type="function">
    <text evidence="1">Involved in the post-transcriptional modification of the uridine at the wobble position (U34) of tRNA(Lys), tRNA(Glu) and tRNA(Gln). Catalyzes the conversion of 2-thiouridine (S2U-RNA) to 2-selenouridine (Se2U-RNA). Acts in a two-step process involving geranylation of 2-thiouridine (S2U) to S-geranyl-2-thiouridine (geS2U) and subsequent selenation of the latter derivative to 2-selenouridine (Se2U) in the tRNA chain.</text>
</comment>
<comment type="catalytic activity">
    <reaction evidence="1">
        <text>5-methylaminomethyl-2-thiouridine(34) in tRNA + selenophosphate + (2E)-geranyl diphosphate + H2O + H(+) = 5-methylaminomethyl-2-selenouridine(34) in tRNA + (2E)-thiogeraniol + phosphate + diphosphate</text>
        <dbReference type="Rhea" id="RHEA:42716"/>
        <dbReference type="Rhea" id="RHEA-COMP:10195"/>
        <dbReference type="Rhea" id="RHEA-COMP:10196"/>
        <dbReference type="ChEBI" id="CHEBI:15377"/>
        <dbReference type="ChEBI" id="CHEBI:15378"/>
        <dbReference type="ChEBI" id="CHEBI:16144"/>
        <dbReference type="ChEBI" id="CHEBI:33019"/>
        <dbReference type="ChEBI" id="CHEBI:43474"/>
        <dbReference type="ChEBI" id="CHEBI:58057"/>
        <dbReference type="ChEBI" id="CHEBI:74455"/>
        <dbReference type="ChEBI" id="CHEBI:82743"/>
        <dbReference type="ChEBI" id="CHEBI:143703"/>
        <dbReference type="EC" id="2.9.1.3"/>
    </reaction>
    <physiologicalReaction direction="left-to-right" evidence="1">
        <dbReference type="Rhea" id="RHEA:42717"/>
    </physiologicalReaction>
</comment>
<comment type="catalytic activity">
    <reaction evidence="1">
        <text>5-methylaminomethyl-2-thiouridine(34) in tRNA + (2E)-geranyl diphosphate = 5-methylaminomethyl-S-(2E)-geranyl-thiouridine(34) in tRNA + diphosphate</text>
        <dbReference type="Rhea" id="RHEA:14085"/>
        <dbReference type="Rhea" id="RHEA-COMP:10195"/>
        <dbReference type="Rhea" id="RHEA-COMP:14654"/>
        <dbReference type="ChEBI" id="CHEBI:33019"/>
        <dbReference type="ChEBI" id="CHEBI:58057"/>
        <dbReference type="ChEBI" id="CHEBI:74455"/>
        <dbReference type="ChEBI" id="CHEBI:140632"/>
    </reaction>
    <physiologicalReaction direction="left-to-right" evidence="1">
        <dbReference type="Rhea" id="RHEA:14086"/>
    </physiologicalReaction>
</comment>
<comment type="catalytic activity">
    <reaction evidence="1">
        <text>5-methylaminomethyl-S-(2E)-geranyl-thiouridine(34) in tRNA + selenophosphate + H(+) = 5-methylaminomethyl-2-(Se-phospho)selenouridine(34) in tRNA + (2E)-thiogeraniol</text>
        <dbReference type="Rhea" id="RHEA:60172"/>
        <dbReference type="Rhea" id="RHEA-COMP:14654"/>
        <dbReference type="Rhea" id="RHEA-COMP:15523"/>
        <dbReference type="ChEBI" id="CHEBI:15378"/>
        <dbReference type="ChEBI" id="CHEBI:16144"/>
        <dbReference type="ChEBI" id="CHEBI:140632"/>
        <dbReference type="ChEBI" id="CHEBI:143702"/>
        <dbReference type="ChEBI" id="CHEBI:143703"/>
    </reaction>
    <physiologicalReaction direction="left-to-right" evidence="1">
        <dbReference type="Rhea" id="RHEA:60173"/>
    </physiologicalReaction>
</comment>
<comment type="catalytic activity">
    <reaction evidence="1">
        <text>5-methylaminomethyl-2-(Se-phospho)selenouridine(34) in tRNA + H2O = 5-methylaminomethyl-2-selenouridine(34) in tRNA + phosphate</text>
        <dbReference type="Rhea" id="RHEA:60176"/>
        <dbReference type="Rhea" id="RHEA-COMP:10196"/>
        <dbReference type="Rhea" id="RHEA-COMP:15523"/>
        <dbReference type="ChEBI" id="CHEBI:15377"/>
        <dbReference type="ChEBI" id="CHEBI:43474"/>
        <dbReference type="ChEBI" id="CHEBI:82743"/>
        <dbReference type="ChEBI" id="CHEBI:143702"/>
    </reaction>
    <physiologicalReaction direction="left-to-right" evidence="1">
        <dbReference type="Rhea" id="RHEA:60177"/>
    </physiologicalReaction>
</comment>
<comment type="subunit">
    <text evidence="1">Monomer.</text>
</comment>
<comment type="similarity">
    <text evidence="1">Belongs to the SelU family.</text>
</comment>
<sequence length="364" mass="41222">MQERHTEQDYRALLIADTPIIDVRAPIEFEQGAMPAAINLPLMDNDERAAVGTCYKQQGSDAALALGHKLVAGEIRQQRMYAWRAACLQNPQGILCCARGGQRSHIVQRWLHEAGIDYPLVEGGYKALRQTAIQATIELAQKPIVLIGGCTGSGKTLLVQQQPNGVDLEGLARHRGSAFGRTLQPQLSQASFENLLAAEMLKTDARQDLRLWVLEDESRMIGSNHLPECLRERMTQAAIAVVEDPFEIRLERLNEEYFLRMHHDFTHAYGDEQGWQEYCEYLHHGLSAIKRRLGLQRYNELAAQLDTALTTQLTTGSTDGHLAWLVPLLKEYYDPMYRYQLEKKAEKVVFRGEWAEVAVWVKAQ</sequence>
<feature type="chain" id="PRO_0000292718" description="tRNA 2-selenouridine synthase">
    <location>
        <begin position="1"/>
        <end position="364"/>
    </location>
</feature>
<feature type="domain" description="Rhodanese" evidence="1">
    <location>
        <begin position="14"/>
        <end position="137"/>
    </location>
</feature>
<feature type="active site" description="S-selanylcysteine intermediate" evidence="1">
    <location>
        <position position="97"/>
    </location>
</feature>
<evidence type="ECO:0000255" key="1">
    <source>
        <dbReference type="HAMAP-Rule" id="MF_01622"/>
    </source>
</evidence>
<proteinExistence type="inferred from homology"/>
<gene>
    <name evidence="1" type="primary">selU</name>
    <name type="ordered locus">SFV_0470</name>
</gene>